<dbReference type="EMBL" id="JH159152">
    <property type="protein sequence ID" value="EGZ26008.1"/>
    <property type="molecule type" value="Genomic_DNA"/>
</dbReference>
<dbReference type="RefSeq" id="XP_009521296.1">
    <property type="nucleotide sequence ID" value="XM_009523001.1"/>
</dbReference>
<dbReference type="EnsemblProtists" id="EGZ26008">
    <property type="protein sequence ID" value="EGZ26008"/>
    <property type="gene ID" value="PHYSODRAFT_480289"/>
</dbReference>
<dbReference type="GeneID" id="20655240"/>
<dbReference type="KEGG" id="psoj:PHYSODRAFT_480289"/>
<dbReference type="InParanoid" id="G4YUT3"/>
<dbReference type="Proteomes" id="UP000002640">
    <property type="component" value="Unassembled WGS sequence"/>
</dbReference>
<dbReference type="GO" id="GO:0005576">
    <property type="term" value="C:extracellular region"/>
    <property type="evidence" value="ECO:0007669"/>
    <property type="project" value="UniProtKB-SubCell"/>
</dbReference>
<dbReference type="GO" id="GO:0042025">
    <property type="term" value="C:host cell nucleus"/>
    <property type="evidence" value="ECO:0007669"/>
    <property type="project" value="UniProtKB-SubCell"/>
</dbReference>
<dbReference type="InterPro" id="IPR045379">
    <property type="entry name" value="Crinkler_N"/>
</dbReference>
<dbReference type="Pfam" id="PF20147">
    <property type="entry name" value="Crinkler"/>
    <property type="match status" value="1"/>
</dbReference>
<evidence type="ECO:0000255" key="1"/>
<evidence type="ECO:0000269" key="2">
    <source>
    </source>
</evidence>
<evidence type="ECO:0000303" key="3">
    <source>
    </source>
</evidence>
<evidence type="ECO:0000305" key="4"/>
<evidence type="ECO:0000305" key="5">
    <source>
    </source>
</evidence>
<comment type="function">
    <text evidence="2">Secreted effector that exhibits strong cell death suppression activity and suppresses cell death induced by a variety of effectors including CRN63, Avh241 and Avr3a (PubMed:26546319). Protects host plants from biotic and abiotic stresses such as salinity and drought by up-regulation of many defense-related genes, including ABC transporters, Cytochrome P450 monooxygenases and receptor-like kinases (RLKs) (PubMed:26546319). Also enhances resistance to Phytophtora pathogens (PubMed:26546319).</text>
</comment>
<comment type="subcellular location">
    <subcellularLocation>
        <location evidence="2">Secreted</location>
    </subcellularLocation>
    <subcellularLocation>
        <location evidence="2">Host nucleus</location>
    </subcellularLocation>
</comment>
<comment type="domain">
    <text evidence="5">The CRN proteins have modular architectures that include a signal peptide, a conserved N-terminus, and highly diverse C-terminal domains. The conserved CRN N-terminus harbors a distinct LXLFLAK motif, which is followed by the conserved DWL domain. A highly conserved HVLVXXP motif marks the end of the CRN N-terminal domains and forms a junction where diverse C-terminal domains are fused. The conserved CRN N-terminus mediates the translocation into the plant host cells.</text>
</comment>
<comment type="similarity">
    <text evidence="4">Belongs to the Crinkler effector family.</text>
</comment>
<keyword id="KW-1048">Host nucleus</keyword>
<keyword id="KW-1185">Reference proteome</keyword>
<keyword id="KW-0964">Secreted</keyword>
<keyword id="KW-0732">Signal</keyword>
<accession>G4YUT3</accession>
<proteinExistence type="inferred from homology"/>
<reference key="1">
    <citation type="journal article" date="2006" name="Science">
        <title>Phytophthora genome sequences uncover evolutionary origins and mechanisms of pathogenesis.</title>
        <authorList>
            <person name="Tyler B.M."/>
            <person name="Tripathy S."/>
            <person name="Zhang X."/>
            <person name="Dehal P."/>
            <person name="Jiang R.H.Y."/>
            <person name="Aerts A."/>
            <person name="Arredondo F.D."/>
            <person name="Baxter L."/>
            <person name="Bensasson D."/>
            <person name="Beynon J.L."/>
            <person name="Chapman J."/>
            <person name="Damasceno C.M.B."/>
            <person name="Dorrance A.E."/>
            <person name="Dou D."/>
            <person name="Dickerman A.W."/>
            <person name="Dubchak I.L."/>
            <person name="Garbelotto M."/>
            <person name="Gijzen M."/>
            <person name="Gordon S.G."/>
            <person name="Govers F."/>
            <person name="Grunwald N.J."/>
            <person name="Huang W."/>
            <person name="Ivors K.L."/>
            <person name="Jones R.W."/>
            <person name="Kamoun S."/>
            <person name="Krampis K."/>
            <person name="Lamour K.H."/>
            <person name="Lee M.-K."/>
            <person name="McDonald W.H."/>
            <person name="Medina M."/>
            <person name="Meijer H.J.G."/>
            <person name="Nordberg E.K."/>
            <person name="Maclean D.J."/>
            <person name="Ospina-Giraldo M.D."/>
            <person name="Morris P.F."/>
            <person name="Phuntumart V."/>
            <person name="Putnam N.H."/>
            <person name="Rash S."/>
            <person name="Rose J.K.C."/>
            <person name="Sakihama Y."/>
            <person name="Salamov A.A."/>
            <person name="Savidor A."/>
            <person name="Scheuring C.F."/>
            <person name="Smith B.M."/>
            <person name="Sobral B.W.S."/>
            <person name="Terry A."/>
            <person name="Torto-Alalibo T.A."/>
            <person name="Win J."/>
            <person name="Xu Z."/>
            <person name="Zhang H."/>
            <person name="Grigoriev I.V."/>
            <person name="Rokhsar D.S."/>
            <person name="Boore J.L."/>
        </authorList>
    </citation>
    <scope>NUCLEOTIDE SEQUENCE [LARGE SCALE GENOMIC DNA]</scope>
    <source>
        <strain>P6497</strain>
    </source>
</reference>
<reference key="2">
    <citation type="journal article" date="2015" name="Plant Cell Physiol.">
        <title>Overexpression of a Phytophthora cytoplasmic CRN effector confers resistance to disease, salinity and drought in Nicotiana benthamiana.</title>
        <authorList>
            <person name="Rajput N.A."/>
            <person name="Zhang M."/>
            <person name="Shen D."/>
            <person name="Liu T."/>
            <person name="Zhang Q."/>
            <person name="Ru Y."/>
            <person name="Sun P."/>
            <person name="Dou D."/>
        </authorList>
    </citation>
    <scope>FUNCTION</scope>
    <scope>SUBCELLULAR LOCATION</scope>
</reference>
<gene>
    <name evidence="3" type="primary">CRN161</name>
    <name type="ORF">PHYSODRAFT_480289</name>
</gene>
<name>CR161_PHYSP</name>
<feature type="signal peptide" evidence="1">
    <location>
        <begin position="1"/>
        <end position="17"/>
    </location>
</feature>
<feature type="chain" id="PRO_0000447896" description="Crinkler effector protein 161">
    <location>
        <begin position="18"/>
        <end position="443"/>
    </location>
</feature>
<feature type="region of interest" description="LQLFLAK domain" evidence="5">
    <location>
        <begin position="18"/>
        <end position="56"/>
    </location>
</feature>
<feature type="region of interest" description="DWL domain" evidence="5">
    <location>
        <begin position="57"/>
        <end position="126"/>
    </location>
</feature>
<feature type="region of interest" description="Effector domain" evidence="5">
    <location>
        <begin position="134"/>
        <end position="439"/>
    </location>
</feature>
<feature type="short sequence motif" description="HVLVXXP motif" evidence="5">
    <location>
        <begin position="127"/>
        <end position="133"/>
    </location>
</feature>
<feature type="short sequence motif" description="Nuclear localization signal 1" evidence="5">
    <location>
        <begin position="161"/>
        <end position="170"/>
    </location>
</feature>
<feature type="short sequence motif" description="Nuclear localization signal 2" evidence="5">
    <location>
        <begin position="384"/>
        <end position="393"/>
    </location>
</feature>
<sequence length="443" mass="49707">MVKLSCVIVGVPGDPFQVEIDEICELVAGLKDAIKKEKPDSIKCDADKLQLFKAAKEDRTFSASGAEEEKKDFRWLKAASDDVKKLKHGEKTAAIEAVVRKDQVLRGKETVSDVLMGMESPSISQIHVLVVLPEDSESEGGTSAQPAEKERLLKFLREQAADKKRKRYWHSEMDMDQGWELLDDFDLTVKPVSTVHAEADPADSFNWQSDLVQDGQEVVLTEEQQRGRYREYVERNIGAVLKENKLCVTAVDEGENVLSVDVPKLGIELRGRTDLLVLSDIVEETSDYLMHLPEVKMLIEVKRDAEASDFQALSELIALDILAEDPVMALLTDLNQSWKFFWVSKKSDDSDCICKATIKSPGEAFQVIRALLTASAETKLPCFHQPLKRLKLSQHRGYKNAECLQQYYKVAEVSGPDYELARAVAEHLVRSMPGYCCANESEP</sequence>
<protein>
    <recommendedName>
        <fullName>Crinkler effector protein 161</fullName>
    </recommendedName>
</protein>
<organism>
    <name type="scientific">Phytophthora sojae (strain P6497)</name>
    <name type="common">Soybean stem and root rot agent</name>
    <name type="synonym">Phytophthora megasperma f. sp. glycines</name>
    <dbReference type="NCBI Taxonomy" id="1094619"/>
    <lineage>
        <taxon>Eukaryota</taxon>
        <taxon>Sar</taxon>
        <taxon>Stramenopiles</taxon>
        <taxon>Oomycota</taxon>
        <taxon>Peronosporales</taxon>
        <taxon>Peronosporaceae</taxon>
        <taxon>Phytophthora</taxon>
    </lineage>
</organism>